<comment type="function">
    <text evidence="1 3">Dermonecrotic toxins cleave the phosphodiester linkage between the phosphate and headgroup of certain phospholipids (sphingolipid and lysolipid substrates), forming an alcohol (often choline) and a cyclic phosphate (By similarity). This toxin acts on sphingomyelin (SM) (By similarity). It may also act on ceramide phosphoethanolamine (CPE), lysophosphatidylcholine (LPC) and lysophosphatidylethanolamine (LPE), but not on lysophosphatidylserine (LPS), and lysophosphatidylglycerol (LPG) (By similarity). It acts by transphosphatidylation, releasing exclusively cyclic phosphate products as second products (By similarity). Induces dermonecrosis, hemolysis, increased vascular permeability, edema, inflammatory response, and platelet aggregation (By similarity).</text>
</comment>
<comment type="catalytic activity">
    <reaction evidence="1">
        <text>an N-(acyl)-sphingosylphosphocholine = an N-(acyl)-sphingosyl-1,3-cyclic phosphate + choline</text>
        <dbReference type="Rhea" id="RHEA:60652"/>
        <dbReference type="ChEBI" id="CHEBI:15354"/>
        <dbReference type="ChEBI" id="CHEBI:64583"/>
        <dbReference type="ChEBI" id="CHEBI:143892"/>
    </reaction>
</comment>
<comment type="catalytic activity">
    <reaction evidence="1">
        <text>an N-(acyl)-sphingosylphosphoethanolamine = an N-(acyl)-sphingosyl-1,3-cyclic phosphate + ethanolamine</text>
        <dbReference type="Rhea" id="RHEA:60648"/>
        <dbReference type="ChEBI" id="CHEBI:57603"/>
        <dbReference type="ChEBI" id="CHEBI:143891"/>
        <dbReference type="ChEBI" id="CHEBI:143892"/>
    </reaction>
</comment>
<comment type="catalytic activity">
    <reaction evidence="1">
        <text>a 1-acyl-sn-glycero-3-phosphocholine = a 1-acyl-sn-glycero-2,3-cyclic phosphate + choline</text>
        <dbReference type="Rhea" id="RHEA:60700"/>
        <dbReference type="ChEBI" id="CHEBI:15354"/>
        <dbReference type="ChEBI" id="CHEBI:58168"/>
        <dbReference type="ChEBI" id="CHEBI:143947"/>
    </reaction>
</comment>
<comment type="catalytic activity">
    <reaction evidence="1">
        <text>a 1-acyl-sn-glycero-3-phosphoethanolamine = a 1-acyl-sn-glycero-2,3-cyclic phosphate + ethanolamine</text>
        <dbReference type="Rhea" id="RHEA:60704"/>
        <dbReference type="ChEBI" id="CHEBI:57603"/>
        <dbReference type="ChEBI" id="CHEBI:64381"/>
        <dbReference type="ChEBI" id="CHEBI:143947"/>
    </reaction>
</comment>
<comment type="cofactor">
    <cofactor evidence="5">
        <name>Mg(2+)</name>
        <dbReference type="ChEBI" id="CHEBI:18420"/>
    </cofactor>
    <text evidence="5">Binds 1 Mg(2+) ion per subunit.</text>
</comment>
<comment type="subcellular location">
    <subcellularLocation>
        <location evidence="8">Secreted</location>
    </subcellularLocation>
</comment>
<comment type="tissue specificity">
    <text evidence="8">Expressed by the venom gland.</text>
</comment>
<comment type="similarity">
    <text evidence="7">Belongs to the arthropod phospholipase D family. Class II subfamily.</text>
</comment>
<comment type="caution">
    <text evidence="1 2 4">The most common activity assay for dermonecrotic toxins detects enzymatic activity by monitoring choline release from substrate. Liberation of choline from sphingomyelin (SM) or lysophosphatidylcholine (LPC) is commonly assumed to result from substrate hydrolysis, giving either ceramide-1-phosphate (C1P) or lysophosphatidic acid (LPA), respectively, as a second product. However, two studies from Lajoie and colleagues (2013 and 2015) report the observation of exclusive formation of cyclic phosphate products as second products, resulting from intramolecular transphosphatidylation. Cyclic phosphates have vastly different biological properties from their monoester counterparts, and they may be relevant to the pathology of brown spider envenomation.</text>
</comment>
<keyword id="KW-0204">Cytolysis</keyword>
<keyword id="KW-1061">Dermonecrotic toxin</keyword>
<keyword id="KW-1015">Disulfide bond</keyword>
<keyword id="KW-0354">Hemolysis</keyword>
<keyword id="KW-0442">Lipid degradation</keyword>
<keyword id="KW-0443">Lipid metabolism</keyword>
<keyword id="KW-0456">Lyase</keyword>
<keyword id="KW-0460">Magnesium</keyword>
<keyword id="KW-0479">Metal-binding</keyword>
<keyword id="KW-0964">Secreted</keyword>
<keyword id="KW-0800">Toxin</keyword>
<accession>C0JAR3</accession>
<reference key="1">
    <citation type="journal article" date="2009" name="Mol. Biol. Evol.">
        <title>Molecular evolution, functional variation, and proposed nomenclature of the gene family that includes sphingomyelinase D in sicariid spider venoms.</title>
        <authorList>
            <person name="Binford G.J."/>
            <person name="Bodner M.R."/>
            <person name="Cordes M.H."/>
            <person name="Baldwin K.L."/>
            <person name="Rynerson M.R."/>
            <person name="Burns S.N."/>
            <person name="Zobel-Thropp P.A."/>
        </authorList>
    </citation>
    <scope>NUCLEOTIDE SEQUENCE [MRNA]</scope>
    <scope>NOMENCLATURE</scope>
    <source>
        <tissue>Venom gland</tissue>
    </source>
</reference>
<protein>
    <recommendedName>
        <fullName evidence="6">Dermonecrotic toxin LhSicTox-alphaIA2avi</fullName>
        <ecNumber evidence="4">4.6.1.-</ecNumber>
    </recommendedName>
    <alternativeName>
        <fullName>Phospholipase D</fullName>
        <shortName>PLD</shortName>
    </alternativeName>
    <alternativeName>
        <fullName>Sphingomyelin phosphodiesterase D</fullName>
        <shortName>SMD</shortName>
        <shortName>SMase D</shortName>
        <shortName>Sphingomyelinase D</shortName>
    </alternativeName>
</protein>
<proteinExistence type="evidence at transcript level"/>
<evidence type="ECO:0000250" key="1">
    <source>
        <dbReference type="UniProtKB" id="A0A0D4WTV1"/>
    </source>
</evidence>
<evidence type="ECO:0000250" key="2">
    <source>
        <dbReference type="UniProtKB" id="A0A0D4WV12"/>
    </source>
</evidence>
<evidence type="ECO:0000250" key="3">
    <source>
        <dbReference type="UniProtKB" id="P0CE80"/>
    </source>
</evidence>
<evidence type="ECO:0000250" key="4">
    <source>
        <dbReference type="UniProtKB" id="Q4ZFU2"/>
    </source>
</evidence>
<evidence type="ECO:0000250" key="5">
    <source>
        <dbReference type="UniProtKB" id="Q8I914"/>
    </source>
</evidence>
<evidence type="ECO:0000303" key="6">
    <source>
    </source>
</evidence>
<evidence type="ECO:0000305" key="7"/>
<evidence type="ECO:0000305" key="8">
    <source>
    </source>
</evidence>
<name>A1IA6_LOXHI</name>
<organism>
    <name type="scientific">Loxosceles hirsuta</name>
    <name type="common">Recluse spider</name>
    <dbReference type="NCBI Taxonomy" id="571525"/>
    <lineage>
        <taxon>Eukaryota</taxon>
        <taxon>Metazoa</taxon>
        <taxon>Ecdysozoa</taxon>
        <taxon>Arthropoda</taxon>
        <taxon>Chelicerata</taxon>
        <taxon>Arachnida</taxon>
        <taxon>Araneae</taxon>
        <taxon>Araneomorphae</taxon>
        <taxon>Haplogynae</taxon>
        <taxon>Scytodoidea</taxon>
        <taxon>Sicariidae</taxon>
        <taxon>Loxosceles</taxon>
    </lineage>
</organism>
<feature type="chain" id="PRO_0000392754" description="Dermonecrotic toxin LhSicTox-alphaIA2avi">
    <location>
        <begin position="1" status="less than"/>
        <end position="273"/>
    </location>
</feature>
<feature type="active site" evidence="5">
    <location>
        <position position="5"/>
    </location>
</feature>
<feature type="active site" description="Nucleophile" evidence="5">
    <location>
        <position position="41"/>
    </location>
</feature>
<feature type="binding site" evidence="5">
    <location>
        <position position="25"/>
    </location>
    <ligand>
        <name>Mg(2+)</name>
        <dbReference type="ChEBI" id="CHEBI:18420"/>
    </ligand>
</feature>
<feature type="binding site" evidence="5">
    <location>
        <position position="27"/>
    </location>
    <ligand>
        <name>Mg(2+)</name>
        <dbReference type="ChEBI" id="CHEBI:18420"/>
    </ligand>
</feature>
<feature type="binding site" evidence="5">
    <location>
        <position position="85"/>
    </location>
    <ligand>
        <name>Mg(2+)</name>
        <dbReference type="ChEBI" id="CHEBI:18420"/>
    </ligand>
</feature>
<feature type="disulfide bond" evidence="3">
    <location>
        <begin position="45"/>
        <end position="51"/>
    </location>
</feature>
<feature type="disulfide bond" evidence="3">
    <location>
        <begin position="47"/>
        <end position="190"/>
    </location>
</feature>
<feature type="non-terminal residue">
    <location>
        <position position="1"/>
    </location>
</feature>
<sequence length="273" mass="30347">WIMGHMVNAIYQIDEFVNLGANSIETDVSFDDNANPEYTYHGIPCDCGRSCLKWENYNDFLKGLRSATTPGNSKYQSKLILVVFDLKTGSLYDNQASEAGKKLAKNLLKHYWNNGNNGGGAYIVLSIPDLNHYPLIKGFTDTLKQEGHPELLEKVGYDFSGNDAVGDVAKAYKKAGVSGHVWQSDGITNCLLRGLTRVKEAVANRDSGNGYINKVYYWTVDKRATTRDALDAGVDGVMTNYPDVIADVMNEAAYKNKVRLATYEDSPWVTFKK</sequence>
<dbReference type="EC" id="4.6.1.-" evidence="4"/>
<dbReference type="EMBL" id="FJ171348">
    <property type="protein sequence ID" value="ACN48844.1"/>
    <property type="molecule type" value="mRNA"/>
</dbReference>
<dbReference type="SMR" id="C0JAR3"/>
<dbReference type="GO" id="GO:0005576">
    <property type="term" value="C:extracellular region"/>
    <property type="evidence" value="ECO:0007669"/>
    <property type="project" value="UniProtKB-SubCell"/>
</dbReference>
<dbReference type="GO" id="GO:0016829">
    <property type="term" value="F:lyase activity"/>
    <property type="evidence" value="ECO:0007669"/>
    <property type="project" value="UniProtKB-KW"/>
</dbReference>
<dbReference type="GO" id="GO:0046872">
    <property type="term" value="F:metal ion binding"/>
    <property type="evidence" value="ECO:0007669"/>
    <property type="project" value="UniProtKB-KW"/>
</dbReference>
<dbReference type="GO" id="GO:0008081">
    <property type="term" value="F:phosphoric diester hydrolase activity"/>
    <property type="evidence" value="ECO:0007669"/>
    <property type="project" value="InterPro"/>
</dbReference>
<dbReference type="GO" id="GO:0090729">
    <property type="term" value="F:toxin activity"/>
    <property type="evidence" value="ECO:0007669"/>
    <property type="project" value="UniProtKB-KW"/>
</dbReference>
<dbReference type="GO" id="GO:0031640">
    <property type="term" value="P:killing of cells of another organism"/>
    <property type="evidence" value="ECO:0007669"/>
    <property type="project" value="UniProtKB-KW"/>
</dbReference>
<dbReference type="GO" id="GO:0016042">
    <property type="term" value="P:lipid catabolic process"/>
    <property type="evidence" value="ECO:0007669"/>
    <property type="project" value="UniProtKB-KW"/>
</dbReference>
<dbReference type="CDD" id="cd08576">
    <property type="entry name" value="GDPD_like_SMaseD_PLD"/>
    <property type="match status" value="1"/>
</dbReference>
<dbReference type="Gene3D" id="3.20.20.190">
    <property type="entry name" value="Phosphatidylinositol (PI) phosphodiesterase"/>
    <property type="match status" value="1"/>
</dbReference>
<dbReference type="InterPro" id="IPR017946">
    <property type="entry name" value="PLC-like_Pdiesterase_TIM-brl"/>
</dbReference>
<dbReference type="Pfam" id="PF13653">
    <property type="entry name" value="GDPD_2"/>
    <property type="match status" value="1"/>
</dbReference>
<dbReference type="SUPFAM" id="SSF51695">
    <property type="entry name" value="PLC-like phosphodiesterases"/>
    <property type="match status" value="1"/>
</dbReference>